<dbReference type="EC" id="3.6.1.23" evidence="1"/>
<dbReference type="EMBL" id="AP009240">
    <property type="protein sequence ID" value="BAG79444.1"/>
    <property type="molecule type" value="Genomic_DNA"/>
</dbReference>
<dbReference type="RefSeq" id="WP_000976070.1">
    <property type="nucleotide sequence ID" value="NC_011415.1"/>
</dbReference>
<dbReference type="SMR" id="B6I3L7"/>
<dbReference type="GeneID" id="93778355"/>
<dbReference type="KEGG" id="ecy:ECSE_3920"/>
<dbReference type="HOGENOM" id="CLU_068508_1_1_6"/>
<dbReference type="UniPathway" id="UPA00610">
    <property type="reaction ID" value="UER00666"/>
</dbReference>
<dbReference type="Proteomes" id="UP000008199">
    <property type="component" value="Chromosome"/>
</dbReference>
<dbReference type="GO" id="GO:0004170">
    <property type="term" value="F:dUTP diphosphatase activity"/>
    <property type="evidence" value="ECO:0007669"/>
    <property type="project" value="UniProtKB-UniRule"/>
</dbReference>
<dbReference type="GO" id="GO:0000287">
    <property type="term" value="F:magnesium ion binding"/>
    <property type="evidence" value="ECO:0007669"/>
    <property type="project" value="UniProtKB-UniRule"/>
</dbReference>
<dbReference type="GO" id="GO:0006226">
    <property type="term" value="P:dUMP biosynthetic process"/>
    <property type="evidence" value="ECO:0007669"/>
    <property type="project" value="UniProtKB-UniRule"/>
</dbReference>
<dbReference type="GO" id="GO:0046081">
    <property type="term" value="P:dUTP catabolic process"/>
    <property type="evidence" value="ECO:0007669"/>
    <property type="project" value="InterPro"/>
</dbReference>
<dbReference type="CDD" id="cd07557">
    <property type="entry name" value="trimeric_dUTPase"/>
    <property type="match status" value="1"/>
</dbReference>
<dbReference type="FunFam" id="2.70.40.10:FF:000002">
    <property type="entry name" value="dUTP diphosphatase"/>
    <property type="match status" value="1"/>
</dbReference>
<dbReference type="Gene3D" id="2.70.40.10">
    <property type="match status" value="1"/>
</dbReference>
<dbReference type="HAMAP" id="MF_00116">
    <property type="entry name" value="dUTPase_bact"/>
    <property type="match status" value="1"/>
</dbReference>
<dbReference type="InterPro" id="IPR008181">
    <property type="entry name" value="dUTPase"/>
</dbReference>
<dbReference type="InterPro" id="IPR029054">
    <property type="entry name" value="dUTPase-like"/>
</dbReference>
<dbReference type="InterPro" id="IPR036157">
    <property type="entry name" value="dUTPase-like_sf"/>
</dbReference>
<dbReference type="InterPro" id="IPR033704">
    <property type="entry name" value="dUTPase_trimeric"/>
</dbReference>
<dbReference type="NCBIfam" id="TIGR00576">
    <property type="entry name" value="dut"/>
    <property type="match status" value="1"/>
</dbReference>
<dbReference type="NCBIfam" id="NF001862">
    <property type="entry name" value="PRK00601.1"/>
    <property type="match status" value="1"/>
</dbReference>
<dbReference type="PANTHER" id="PTHR11241">
    <property type="entry name" value="DEOXYURIDINE 5'-TRIPHOSPHATE NUCLEOTIDOHYDROLASE"/>
    <property type="match status" value="1"/>
</dbReference>
<dbReference type="PANTHER" id="PTHR11241:SF0">
    <property type="entry name" value="DEOXYURIDINE 5'-TRIPHOSPHATE NUCLEOTIDOHYDROLASE"/>
    <property type="match status" value="1"/>
</dbReference>
<dbReference type="Pfam" id="PF00692">
    <property type="entry name" value="dUTPase"/>
    <property type="match status" value="1"/>
</dbReference>
<dbReference type="SUPFAM" id="SSF51283">
    <property type="entry name" value="dUTPase-like"/>
    <property type="match status" value="1"/>
</dbReference>
<proteinExistence type="inferred from homology"/>
<accession>B6I3L7</accession>
<keyword id="KW-0378">Hydrolase</keyword>
<keyword id="KW-0460">Magnesium</keyword>
<keyword id="KW-0479">Metal-binding</keyword>
<keyword id="KW-0546">Nucleotide metabolism</keyword>
<protein>
    <recommendedName>
        <fullName evidence="1">Deoxyuridine 5'-triphosphate nucleotidohydrolase</fullName>
        <shortName evidence="1">dUTPase</shortName>
        <ecNumber evidence="1">3.6.1.23</ecNumber>
    </recommendedName>
    <alternativeName>
        <fullName evidence="1">dUTP pyrophosphatase</fullName>
    </alternativeName>
</protein>
<name>DUT_ECOSE</name>
<organism>
    <name type="scientific">Escherichia coli (strain SE11)</name>
    <dbReference type="NCBI Taxonomy" id="409438"/>
    <lineage>
        <taxon>Bacteria</taxon>
        <taxon>Pseudomonadati</taxon>
        <taxon>Pseudomonadota</taxon>
        <taxon>Gammaproteobacteria</taxon>
        <taxon>Enterobacterales</taxon>
        <taxon>Enterobacteriaceae</taxon>
        <taxon>Escherichia</taxon>
    </lineage>
</organism>
<evidence type="ECO:0000255" key="1">
    <source>
        <dbReference type="HAMAP-Rule" id="MF_00116"/>
    </source>
</evidence>
<reference key="1">
    <citation type="journal article" date="2008" name="DNA Res.">
        <title>Complete genome sequence and comparative analysis of the wild-type commensal Escherichia coli strain SE11 isolated from a healthy adult.</title>
        <authorList>
            <person name="Oshima K."/>
            <person name="Toh H."/>
            <person name="Ogura Y."/>
            <person name="Sasamoto H."/>
            <person name="Morita H."/>
            <person name="Park S.-H."/>
            <person name="Ooka T."/>
            <person name="Iyoda S."/>
            <person name="Taylor T.D."/>
            <person name="Hayashi T."/>
            <person name="Itoh K."/>
            <person name="Hattori M."/>
        </authorList>
    </citation>
    <scope>NUCLEOTIDE SEQUENCE [LARGE SCALE GENOMIC DNA]</scope>
    <source>
        <strain>SE11</strain>
    </source>
</reference>
<feature type="chain" id="PRO_1000094962" description="Deoxyuridine 5'-triphosphate nucleotidohydrolase">
    <location>
        <begin position="1"/>
        <end position="152"/>
    </location>
</feature>
<feature type="binding site" evidence="1">
    <location>
        <begin position="71"/>
        <end position="73"/>
    </location>
    <ligand>
        <name>substrate</name>
    </ligand>
</feature>
<feature type="binding site" evidence="1">
    <location>
        <position position="84"/>
    </location>
    <ligand>
        <name>substrate</name>
    </ligand>
</feature>
<feature type="binding site" evidence="1">
    <location>
        <begin position="88"/>
        <end position="90"/>
    </location>
    <ligand>
        <name>substrate</name>
    </ligand>
</feature>
<feature type="binding site" evidence="1">
    <location>
        <position position="98"/>
    </location>
    <ligand>
        <name>substrate</name>
    </ligand>
</feature>
<sequence>MMKKIDVKILDPRVGKEFPLPTYATSGSAGLDLRACLDDAVELAPGDTTLVPTGLAIHIADPSLAAMMLPRSGLGHKHGIVLGNLVGLIDSDYQGQLMISVWNRGQDSFTIQPGERIAQMIFVPVVQAEFNLVEDFDATDRGEGGFGHSGRQ</sequence>
<gene>
    <name evidence="1" type="primary">dut</name>
    <name type="ordered locus">ECSE_3920</name>
</gene>
<comment type="function">
    <text evidence="1">This enzyme is involved in nucleotide metabolism: it produces dUMP, the immediate precursor of thymidine nucleotides and it decreases the intracellular concentration of dUTP so that uracil cannot be incorporated into DNA.</text>
</comment>
<comment type="catalytic activity">
    <reaction evidence="1">
        <text>dUTP + H2O = dUMP + diphosphate + H(+)</text>
        <dbReference type="Rhea" id="RHEA:10248"/>
        <dbReference type="ChEBI" id="CHEBI:15377"/>
        <dbReference type="ChEBI" id="CHEBI:15378"/>
        <dbReference type="ChEBI" id="CHEBI:33019"/>
        <dbReference type="ChEBI" id="CHEBI:61555"/>
        <dbReference type="ChEBI" id="CHEBI:246422"/>
        <dbReference type="EC" id="3.6.1.23"/>
    </reaction>
</comment>
<comment type="cofactor">
    <cofactor evidence="1">
        <name>Mg(2+)</name>
        <dbReference type="ChEBI" id="CHEBI:18420"/>
    </cofactor>
</comment>
<comment type="pathway">
    <text evidence="1">Pyrimidine metabolism; dUMP biosynthesis; dUMP from dCTP (dUTP route): step 2/2.</text>
</comment>
<comment type="subunit">
    <text evidence="1">Homotrimer.</text>
</comment>
<comment type="similarity">
    <text evidence="1">Belongs to the dUTPase family.</text>
</comment>